<accession>Q5NPK9</accession>
<proteinExistence type="inferred from homology"/>
<protein>
    <recommendedName>
        <fullName evidence="1">Large ribosomal subunit protein uL10</fullName>
    </recommendedName>
    <alternativeName>
        <fullName evidence="2">50S ribosomal protein L10</fullName>
    </alternativeName>
</protein>
<evidence type="ECO:0000255" key="1">
    <source>
        <dbReference type="HAMAP-Rule" id="MF_00362"/>
    </source>
</evidence>
<evidence type="ECO:0000305" key="2"/>
<feature type="chain" id="PRO_0000154755" description="Large ribosomal subunit protein uL10">
    <location>
        <begin position="1"/>
        <end position="171"/>
    </location>
</feature>
<dbReference type="EMBL" id="AE008692">
    <property type="protein sequence ID" value="AAV89351.1"/>
    <property type="molecule type" value="Genomic_DNA"/>
</dbReference>
<dbReference type="RefSeq" id="WP_011240612.1">
    <property type="nucleotide sequence ID" value="NZ_CP035711.1"/>
</dbReference>
<dbReference type="SMR" id="Q5NPK9"/>
<dbReference type="STRING" id="264203.ZMO0727"/>
<dbReference type="GeneID" id="79904101"/>
<dbReference type="KEGG" id="zmo:ZMO0727"/>
<dbReference type="eggNOG" id="COG0244">
    <property type="taxonomic scope" value="Bacteria"/>
</dbReference>
<dbReference type="HOGENOM" id="CLU_092227_0_0_5"/>
<dbReference type="Proteomes" id="UP000001173">
    <property type="component" value="Chromosome"/>
</dbReference>
<dbReference type="GO" id="GO:0015934">
    <property type="term" value="C:large ribosomal subunit"/>
    <property type="evidence" value="ECO:0007669"/>
    <property type="project" value="InterPro"/>
</dbReference>
<dbReference type="GO" id="GO:0070180">
    <property type="term" value="F:large ribosomal subunit rRNA binding"/>
    <property type="evidence" value="ECO:0007669"/>
    <property type="project" value="UniProtKB-UniRule"/>
</dbReference>
<dbReference type="GO" id="GO:0003735">
    <property type="term" value="F:structural constituent of ribosome"/>
    <property type="evidence" value="ECO:0007669"/>
    <property type="project" value="InterPro"/>
</dbReference>
<dbReference type="GO" id="GO:0006412">
    <property type="term" value="P:translation"/>
    <property type="evidence" value="ECO:0007669"/>
    <property type="project" value="UniProtKB-UniRule"/>
</dbReference>
<dbReference type="CDD" id="cd05797">
    <property type="entry name" value="Ribosomal_L10"/>
    <property type="match status" value="1"/>
</dbReference>
<dbReference type="Gene3D" id="3.30.70.1730">
    <property type="match status" value="1"/>
</dbReference>
<dbReference type="Gene3D" id="6.10.250.290">
    <property type="match status" value="1"/>
</dbReference>
<dbReference type="HAMAP" id="MF_00362">
    <property type="entry name" value="Ribosomal_uL10"/>
    <property type="match status" value="1"/>
</dbReference>
<dbReference type="InterPro" id="IPR001790">
    <property type="entry name" value="Ribosomal_uL10"/>
</dbReference>
<dbReference type="InterPro" id="IPR043141">
    <property type="entry name" value="Ribosomal_uL10-like_sf"/>
</dbReference>
<dbReference type="InterPro" id="IPR022973">
    <property type="entry name" value="Ribosomal_uL10_bac"/>
</dbReference>
<dbReference type="InterPro" id="IPR047865">
    <property type="entry name" value="Ribosomal_uL10_bac_type"/>
</dbReference>
<dbReference type="InterPro" id="IPR002363">
    <property type="entry name" value="Ribosomal_uL10_CS_bac"/>
</dbReference>
<dbReference type="NCBIfam" id="NF000955">
    <property type="entry name" value="PRK00099.1-1"/>
    <property type="match status" value="1"/>
</dbReference>
<dbReference type="PANTHER" id="PTHR11560">
    <property type="entry name" value="39S RIBOSOMAL PROTEIN L10, MITOCHONDRIAL"/>
    <property type="match status" value="1"/>
</dbReference>
<dbReference type="Pfam" id="PF00466">
    <property type="entry name" value="Ribosomal_L10"/>
    <property type="match status" value="1"/>
</dbReference>
<dbReference type="SUPFAM" id="SSF160369">
    <property type="entry name" value="Ribosomal protein L10-like"/>
    <property type="match status" value="1"/>
</dbReference>
<dbReference type="PROSITE" id="PS01109">
    <property type="entry name" value="RIBOSOMAL_L10"/>
    <property type="match status" value="1"/>
</dbReference>
<comment type="function">
    <text evidence="1">Forms part of the ribosomal stalk, playing a central role in the interaction of the ribosome with GTP-bound translation factors.</text>
</comment>
<comment type="subunit">
    <text evidence="1">Part of the ribosomal stalk of the 50S ribosomal subunit. The N-terminus interacts with L11 and the large rRNA to form the base of the stalk. The C-terminus forms an elongated spine to which L12 dimers bind in a sequential fashion forming a multimeric L10(L12)X complex.</text>
</comment>
<comment type="similarity">
    <text evidence="1">Belongs to the universal ribosomal protein uL10 family.</text>
</comment>
<keyword id="KW-1185">Reference proteome</keyword>
<keyword id="KW-0687">Ribonucleoprotein</keyword>
<keyword id="KW-0689">Ribosomal protein</keyword>
<keyword id="KW-0694">RNA-binding</keyword>
<keyword id="KW-0699">rRNA-binding</keyword>
<sequence length="171" mass="17489">MERAQKVELVAGLKSAFAEAGVIVVTRNLGLTVAQSTVLRSKMREAGASFKVAKNKLTRIAVEGTPQAPLSDLLTGPTAIATSADPVAAAKVAVEFAKTNKKLEIVGAVMGTTLLDIAGVQALAELPSLDELRGKIVGLISAPATKIAQTIQAPAGQLARVFGAYAAKDAA</sequence>
<organism>
    <name type="scientific">Zymomonas mobilis subsp. mobilis (strain ATCC 31821 / ZM4 / CP4)</name>
    <dbReference type="NCBI Taxonomy" id="264203"/>
    <lineage>
        <taxon>Bacteria</taxon>
        <taxon>Pseudomonadati</taxon>
        <taxon>Pseudomonadota</taxon>
        <taxon>Alphaproteobacteria</taxon>
        <taxon>Sphingomonadales</taxon>
        <taxon>Zymomonadaceae</taxon>
        <taxon>Zymomonas</taxon>
    </lineage>
</organism>
<gene>
    <name evidence="1" type="primary">rplJ</name>
    <name type="ordered locus">ZMO0727</name>
</gene>
<name>RL10_ZYMMO</name>
<reference key="1">
    <citation type="journal article" date="2005" name="Nat. Biotechnol.">
        <title>The genome sequence of the ethanologenic bacterium Zymomonas mobilis ZM4.</title>
        <authorList>
            <person name="Seo J.-S."/>
            <person name="Chong H."/>
            <person name="Park H.S."/>
            <person name="Yoon K.-O."/>
            <person name="Jung C."/>
            <person name="Kim J.J."/>
            <person name="Hong J.H."/>
            <person name="Kim H."/>
            <person name="Kim J.-H."/>
            <person name="Kil J.-I."/>
            <person name="Park C.J."/>
            <person name="Oh H.-M."/>
            <person name="Lee J.-S."/>
            <person name="Jin S.-J."/>
            <person name="Um H.-W."/>
            <person name="Lee H.-J."/>
            <person name="Oh S.-J."/>
            <person name="Kim J.Y."/>
            <person name="Kang H.L."/>
            <person name="Lee S.Y."/>
            <person name="Lee K.J."/>
            <person name="Kang H.S."/>
        </authorList>
    </citation>
    <scope>NUCLEOTIDE SEQUENCE [LARGE SCALE GENOMIC DNA]</scope>
    <source>
        <strain>ATCC 31821 / ZM4 / CP4</strain>
    </source>
</reference>